<protein>
    <recommendedName>
        <fullName>G-protein coupled receptor 39</fullName>
    </recommendedName>
</protein>
<organism>
    <name type="scientific">Mus musculus</name>
    <name type="common">Mouse</name>
    <dbReference type="NCBI Taxonomy" id="10090"/>
    <lineage>
        <taxon>Eukaryota</taxon>
        <taxon>Metazoa</taxon>
        <taxon>Chordata</taxon>
        <taxon>Craniata</taxon>
        <taxon>Vertebrata</taxon>
        <taxon>Euteleostomi</taxon>
        <taxon>Mammalia</taxon>
        <taxon>Eutheria</taxon>
        <taxon>Euarchontoglires</taxon>
        <taxon>Glires</taxon>
        <taxon>Rodentia</taxon>
        <taxon>Myomorpha</taxon>
        <taxon>Muroidea</taxon>
        <taxon>Muridae</taxon>
        <taxon>Murinae</taxon>
        <taxon>Mus</taxon>
        <taxon>Mus</taxon>
    </lineage>
</organism>
<comment type="function">
    <text evidence="1 7 8 9 10">Zinc-sensing receptor that can sense changes in extracellular Zn(2+), mediate Zn(2+) signal transmission, and participates in the regulation of numerous physiological processes including glucose homeostasis regulation, gastrointestinal mobility, hormone secretion and cell death (PubMed:17030183, PubMed:18180304). Activation by Zn(2+) in keratinocytes increases the intracellular concentration of Ca(2+) and activates the ERK/MAPK and PI3K/AKT signaling pathways leading to epithelial repair (By similarity). Plays an essential role in normal wound healing by inducing the production of cytokines including the major inflammatory cytokine IL6 via the PKC/MAPK/CEBPB pathway (PubMed:31346193). Regulates adipose tissue metabolism, especially lipolysis, and regulates the function of lipases, such as hormone-sensitive lipase and adipose triglyceride lipase (PubMed:21784784). Plays a role in the inhibition of cell death and protects against oxidative, endoplasmic reticulum and mitochondrial stress by inducing secretion of the cytoprotective pigment epithelium-derived growth factor (PEDF) and probably other protective transcripts in a GNA13/RHOA/SRE-dependent manner. Forms dynamic heteroreceptor complexes with HTR1A and GALR1 depending on cell type or specific physiological states, resulting in signaling diversity: HTR1A-GPR39 shows additive increase in signaling along the serum response element (SRE) and NF-kappa-B pathways while GALR1 acts as an antagonist blocking SRE (By similarity).</text>
</comment>
<comment type="subunit">
    <text evidence="1">Interacts with HTR1A. Interacts with GALR1.</text>
</comment>
<comment type="subcellular location">
    <subcellularLocation>
        <location evidence="1">Cell membrane</location>
        <topology evidence="1">Multi-pass membrane protein</topology>
    </subcellularLocation>
</comment>
<comment type="tissue specificity">
    <text evidence="6 7">Expression is detected in septumamygdala, parietal cells, enterocytes, neurons and pancreas, in peripheral organs such as the duodenum and kidney but not in the pituitary and hypothalamus.</text>
</comment>
<comment type="disruption phenotype">
    <text evidence="9 11">GPR39-deletion mice show a significant increase in body weight when fed with a high-fat diet, with about 2-fold increase in fat mass compared with control mice (PubMed:21784784). In addition, GPR39 knockout impairs declarative memory and spares procedural memory (PubMed:36087899).</text>
</comment>
<comment type="miscellaneous">
    <text evidence="12">Was originally reported to be the receptor of obestatin. However, numerous reports concluded that GPR39 was not the receptor for obestatin (PubMed:16959833).</text>
</comment>
<comment type="similarity">
    <text evidence="4">Belongs to the G-protein coupled receptor 1 family.</text>
</comment>
<accession>Q5U431</accession>
<accession>Q80UC7</accession>
<name>GPR39_MOUSE</name>
<gene>
    <name type="primary">Gpr39</name>
</gene>
<evidence type="ECO:0000250" key="1">
    <source>
        <dbReference type="UniProtKB" id="O43194"/>
    </source>
</evidence>
<evidence type="ECO:0000250" key="2">
    <source>
        <dbReference type="UniProtKB" id="P20789"/>
    </source>
</evidence>
<evidence type="ECO:0000255" key="3"/>
<evidence type="ECO:0000255" key="4">
    <source>
        <dbReference type="PROSITE-ProRule" id="PRU00521"/>
    </source>
</evidence>
<evidence type="ECO:0000256" key="5">
    <source>
        <dbReference type="SAM" id="MobiDB-lite"/>
    </source>
</evidence>
<evidence type="ECO:0000269" key="6">
    <source>
    </source>
</evidence>
<evidence type="ECO:0000269" key="7">
    <source>
    </source>
</evidence>
<evidence type="ECO:0000269" key="8">
    <source>
    </source>
</evidence>
<evidence type="ECO:0000269" key="9">
    <source>
    </source>
</evidence>
<evidence type="ECO:0000269" key="10">
    <source>
    </source>
</evidence>
<evidence type="ECO:0000269" key="11">
    <source>
    </source>
</evidence>
<evidence type="ECO:0000305" key="12">
    <source>
    </source>
</evidence>
<reference key="1">
    <citation type="journal article" date="2004" name="Genome Res.">
        <title>The status, quality, and expansion of the NIH full-length cDNA project: the Mammalian Gene Collection (MGC).</title>
        <authorList>
            <consortium name="The MGC Project Team"/>
        </authorList>
    </citation>
    <scope>NUCLEOTIDE SEQUENCE [LARGE SCALE MRNA]</scope>
    <source>
        <strain>C3H/He</strain>
        <tissue>Mesenchymal stem cell</tissue>
    </source>
</reference>
<reference key="2">
    <citation type="journal article" date="2003" name="Proc. Natl. Acad. Sci. U.S.A.">
        <title>The G protein-coupled receptor repertoires of human and mouse.</title>
        <authorList>
            <person name="Vassilatis D.K."/>
            <person name="Hohmann J.G."/>
            <person name="Zeng H."/>
            <person name="Li F."/>
            <person name="Ranchalis J.E."/>
            <person name="Mortrud M.T."/>
            <person name="Brown A."/>
            <person name="Rodriguez S.S."/>
            <person name="Weller J.R."/>
            <person name="Wright A.C."/>
            <person name="Bergmann J.E."/>
            <person name="Gaitanaris G.A."/>
        </authorList>
    </citation>
    <scope>NUCLEOTIDE SEQUENCE [LARGE SCALE MRNA] OF 10-164</scope>
</reference>
<reference key="3">
    <citation type="journal article" date="2006" name="Gastroenterology">
        <title>Altered gastrointestinal and metabolic function in the GPR39-obestatin receptor-knockout mouse.</title>
        <authorList>
            <person name="Moechars D."/>
            <person name="Depoortere I."/>
            <person name="Moreaux B."/>
            <person name="de Smet B."/>
            <person name="Goris I."/>
            <person name="Hoskens L."/>
            <person name="Daneels G."/>
            <person name="Kass S."/>
            <person name="Ver Donck L."/>
            <person name="Peeters T."/>
            <person name="Coulie B."/>
        </authorList>
    </citation>
    <scope>TISSUE SPECIFICITY</scope>
    <scope>FUNCTION</scope>
</reference>
<reference key="4">
    <citation type="journal article" date="2007" name="Endocrinology">
        <title>GPR39 signaling is stimulated by zinc ions but not by obestatin.</title>
        <authorList>
            <person name="Holst B."/>
            <person name="Egerod K.L."/>
            <person name="Schild E."/>
            <person name="Vickers S.P."/>
            <person name="Cheetham S."/>
            <person name="Gerlach L.O."/>
            <person name="Storjohann L."/>
            <person name="Stidsen C.E."/>
            <person name="Jones R."/>
            <person name="Beck-Sickinger A.G."/>
            <person name="Schwartz T.W."/>
        </authorList>
    </citation>
    <scope>TISSUE SPECIFICITY</scope>
    <scope>PRELIMINARY FUNCTION</scope>
</reference>
<reference key="5">
    <citation type="journal article" date="2008" name="J. Biol. Chem.">
        <title>The constitutively active orphan G-protein-coupled receptor GPR39 protects from cell death by increasing secretion of pigment epithelium-derived growth factor.</title>
        <authorList>
            <person name="Dittmer S."/>
            <person name="Sahin M."/>
            <person name="Pantlen A."/>
            <person name="Saxena A."/>
            <person name="Toutzaris D."/>
            <person name="Pina A.L."/>
            <person name="Geerts A."/>
            <person name="Golz S."/>
            <person name="Methner A."/>
        </authorList>
    </citation>
    <scope>FUNCTION</scope>
</reference>
<reference key="6">
    <citation type="journal article" date="2011" name="FASEB J.">
        <title>Deficiency of the GPR39 receptor is associated with obesity and altered adipocyte metabolism.</title>
        <authorList>
            <person name="Petersen P.S."/>
            <person name="Jin C."/>
            <person name="Madsen A.N."/>
            <person name="Rasmussen M."/>
            <person name="Kuhre R."/>
            <person name="Egerod K.L."/>
            <person name="Nielsen L.B."/>
            <person name="Schwartz T.W."/>
            <person name="Holst B."/>
        </authorList>
    </citation>
    <scope>FUNCTION</scope>
    <scope>DISRUPTION PHENOTYPE</scope>
</reference>
<reference key="7">
    <citation type="journal article" date="2019" name="Sci. Rep.">
        <title>Mast cells play role in wound healing through the ZnT2/GPR39/IL-6 axis.</title>
        <authorList>
            <person name="Nishida K."/>
            <person name="Hasegawa A."/>
            <person name="Yamasaki S."/>
            <person name="Uchida R."/>
            <person name="Ohashi W."/>
            <person name="Kurashima Y."/>
            <person name="Kunisawa J."/>
            <person name="Kimura S."/>
            <person name="Iwanaga T."/>
            <person name="Watarai H."/>
            <person name="Hase K."/>
            <person name="Ogura H."/>
            <person name="Nakayama M."/>
            <person name="Kashiwakura J.I."/>
            <person name="Okayama Y."/>
            <person name="Kubo M."/>
            <person name="Ohara O."/>
            <person name="Kiyono H."/>
            <person name="Koseki H."/>
            <person name="Murakami M."/>
            <person name="Hirano T."/>
        </authorList>
    </citation>
    <scope>FUNCTION</scope>
</reference>
<reference key="8">
    <citation type="journal article" date="2022" name="Neuroscience">
        <title>The Zinc-sensing Receptor (GPR39) Modulates Declarative Memory and Age-related Hippocampal Gene Expression in Male Mice.</title>
        <authorList>
            <person name="Rychlik M."/>
            <person name="Starowicz G."/>
            <person name="Starnowska-Sokol J."/>
            <person name="Mlyniec K."/>
        </authorList>
    </citation>
    <scope>DISRUPTION PHENOTYPE</scope>
</reference>
<sequence>MASSSGSNHICSRVIDHSHVPEFEVATWIKITLILVYLIIFVVGILGNSVTIRVTQVLQKKGYLQKEVTDHMVSLACSDILVFLIGMPMEFYSIIWNPLTTPSYALSCKLHTFLFETCSYATLLHVLTLSFERYIAICHPFKYKAVSGPRQVKLLIGFVWVTSALVALPLLFAMGIEYPLVNVPTHKGLNCNLSRTRHHDEPGNSNMSICTNLSNRWEVFQSSIFGAFAVYLVVLASVAFMCWNMMKVLMKSKQGTLAGTGPQLQLRKSESEESRTARRQTIIFLRLIVVTLAVCWMPNQIRRIMAAAKPKHDWTRTYFRAYMILLPFSDTFFYLSSVVNPLLYNVSSQQFRKVFWQVLCCRLTLQHANQEKRQRARFISTKDSTSSARSPLIFLASRRSNSSSRRTNKVFLSTFQTEAKPGEAKPQPLSPESPQTGSETKPAGSTTENSLQEQEV</sequence>
<dbReference type="EMBL" id="BC085285">
    <property type="protein sequence ID" value="AAH85285.1"/>
    <property type="molecule type" value="mRNA"/>
</dbReference>
<dbReference type="EMBL" id="AY255549">
    <property type="protein sequence ID" value="AAO85061.1"/>
    <property type="molecule type" value="mRNA"/>
</dbReference>
<dbReference type="CCDS" id="CCDS48344.1"/>
<dbReference type="SMR" id="Q5U431"/>
<dbReference type="FunCoup" id="Q5U431">
    <property type="interactions" value="44"/>
</dbReference>
<dbReference type="STRING" id="10090.ENSMUSP00000027581"/>
<dbReference type="BindingDB" id="Q5U431"/>
<dbReference type="ChEMBL" id="CHEMBL3341584"/>
<dbReference type="GlyCosmos" id="Q5U431">
    <property type="glycosylation" value="2 sites, No reported glycans"/>
</dbReference>
<dbReference type="GlyGen" id="Q5U431">
    <property type="glycosylation" value="2 sites"/>
</dbReference>
<dbReference type="iPTMnet" id="Q5U431"/>
<dbReference type="PhosphoSitePlus" id="Q5U431"/>
<dbReference type="PaxDb" id="10090-ENSMUSP00000027581"/>
<dbReference type="ProteomicsDB" id="271273"/>
<dbReference type="UCSC" id="uc007ckh.2">
    <property type="organism name" value="mouse"/>
</dbReference>
<dbReference type="AGR" id="MGI:1918361"/>
<dbReference type="MGI" id="MGI:1918361">
    <property type="gene designation" value="Gpr39"/>
</dbReference>
<dbReference type="eggNOG" id="KOG3656">
    <property type="taxonomic scope" value="Eukaryota"/>
</dbReference>
<dbReference type="InParanoid" id="Q5U431"/>
<dbReference type="PhylomeDB" id="Q5U431"/>
<dbReference type="Reactome" id="R-MMU-373076">
    <property type="pathway name" value="Class A/1 (Rhodopsin-like receptors)"/>
</dbReference>
<dbReference type="Reactome" id="R-MMU-416476">
    <property type="pathway name" value="G alpha (q) signalling events"/>
</dbReference>
<dbReference type="Reactome" id="R-MMU-418555">
    <property type="pathway name" value="G alpha (s) signalling events"/>
</dbReference>
<dbReference type="ChiTaRS" id="Gpr39">
    <property type="organism name" value="mouse"/>
</dbReference>
<dbReference type="PRO" id="PR:Q5U431"/>
<dbReference type="Proteomes" id="UP000000589">
    <property type="component" value="Unplaced"/>
</dbReference>
<dbReference type="RNAct" id="Q5U431">
    <property type="molecule type" value="protein"/>
</dbReference>
<dbReference type="GO" id="GO:0005886">
    <property type="term" value="C:plasma membrane"/>
    <property type="evidence" value="ECO:0007669"/>
    <property type="project" value="UniProtKB-SubCell"/>
</dbReference>
<dbReference type="GO" id="GO:0004930">
    <property type="term" value="F:G protein-coupled receptor activity"/>
    <property type="evidence" value="ECO:0000315"/>
    <property type="project" value="MGI"/>
</dbReference>
<dbReference type="GO" id="GO:0046872">
    <property type="term" value="F:metal ion binding"/>
    <property type="evidence" value="ECO:0007669"/>
    <property type="project" value="UniProtKB-KW"/>
</dbReference>
<dbReference type="GO" id="GO:0008343">
    <property type="term" value="P:adult feeding behavior"/>
    <property type="evidence" value="ECO:0000315"/>
    <property type="project" value="MGI"/>
</dbReference>
<dbReference type="GO" id="GO:0071294">
    <property type="term" value="P:cellular response to zinc ion"/>
    <property type="evidence" value="ECO:0000315"/>
    <property type="project" value="MGI"/>
</dbReference>
<dbReference type="GO" id="GO:0042632">
    <property type="term" value="P:cholesterol homeostasis"/>
    <property type="evidence" value="ECO:0000315"/>
    <property type="project" value="MGI"/>
</dbReference>
<dbReference type="GO" id="GO:0002024">
    <property type="term" value="P:diet induced thermogenesis"/>
    <property type="evidence" value="ECO:0000315"/>
    <property type="project" value="MGI"/>
</dbReference>
<dbReference type="GO" id="GO:0051649">
    <property type="term" value="P:establishment of localization in cell"/>
    <property type="evidence" value="ECO:0000315"/>
    <property type="project" value="MGI"/>
</dbReference>
<dbReference type="GO" id="GO:0001696">
    <property type="term" value="P:gastric acid secretion"/>
    <property type="evidence" value="ECO:0000315"/>
    <property type="project" value="MGI"/>
</dbReference>
<dbReference type="GO" id="GO:0035483">
    <property type="term" value="P:gastric emptying"/>
    <property type="evidence" value="ECO:0000315"/>
    <property type="project" value="MGI"/>
</dbReference>
<dbReference type="GO" id="GO:0042593">
    <property type="term" value="P:glucose homeostasis"/>
    <property type="evidence" value="ECO:0000315"/>
    <property type="project" value="MGI"/>
</dbReference>
<dbReference type="GO" id="GO:0030073">
    <property type="term" value="P:insulin secretion"/>
    <property type="evidence" value="ECO:0000315"/>
    <property type="project" value="MGI"/>
</dbReference>
<dbReference type="GO" id="GO:0035773">
    <property type="term" value="P:insulin secretion involved in cellular response to glucose stimulus"/>
    <property type="evidence" value="ECO:0000315"/>
    <property type="project" value="MGI"/>
</dbReference>
<dbReference type="GO" id="GO:0060455">
    <property type="term" value="P:negative regulation of gastric acid secretion"/>
    <property type="evidence" value="ECO:0000315"/>
    <property type="project" value="MGI"/>
</dbReference>
<dbReference type="GO" id="GO:0070050">
    <property type="term" value="P:neuron cellular homeostasis"/>
    <property type="evidence" value="ECO:0000315"/>
    <property type="project" value="MGI"/>
</dbReference>
<dbReference type="GO" id="GO:0032024">
    <property type="term" value="P:positive regulation of insulin secretion"/>
    <property type="evidence" value="ECO:0000315"/>
    <property type="project" value="MGI"/>
</dbReference>
<dbReference type="GO" id="GO:0035774">
    <property type="term" value="P:positive regulation of insulin secretion involved in cellular response to glucose stimulus"/>
    <property type="evidence" value="ECO:0000315"/>
    <property type="project" value="MGI"/>
</dbReference>
<dbReference type="GO" id="GO:0051281">
    <property type="term" value="P:positive regulation of release of sequestered calcium ion into cytosol"/>
    <property type="evidence" value="ECO:0000315"/>
    <property type="project" value="MGI"/>
</dbReference>
<dbReference type="GO" id="GO:0030641">
    <property type="term" value="P:regulation of cellular pH"/>
    <property type="evidence" value="ECO:0000315"/>
    <property type="project" value="MGI"/>
</dbReference>
<dbReference type="GO" id="GO:0019216">
    <property type="term" value="P:regulation of lipid metabolic process"/>
    <property type="evidence" value="ECO:0000315"/>
    <property type="project" value="MGI"/>
</dbReference>
<dbReference type="GO" id="GO:0042391">
    <property type="term" value="P:regulation of membrane potential"/>
    <property type="evidence" value="ECO:0000315"/>
    <property type="project" value="MGI"/>
</dbReference>
<dbReference type="GO" id="GO:0051209">
    <property type="term" value="P:release of sequestered calcium ion into cytosol"/>
    <property type="evidence" value="ECO:0000315"/>
    <property type="project" value="MGI"/>
</dbReference>
<dbReference type="GO" id="GO:0009410">
    <property type="term" value="P:response to xenobiotic stimulus"/>
    <property type="evidence" value="ECO:0000315"/>
    <property type="project" value="MGI"/>
</dbReference>
<dbReference type="CDD" id="cd15135">
    <property type="entry name" value="7tmA_GPR39"/>
    <property type="match status" value="1"/>
</dbReference>
<dbReference type="Gene3D" id="1.20.1070.10">
    <property type="entry name" value="Rhodopsin 7-helix transmembrane proteins"/>
    <property type="match status" value="1"/>
</dbReference>
<dbReference type="InterPro" id="IPR000276">
    <property type="entry name" value="GPCR_Rhodpsn"/>
</dbReference>
<dbReference type="InterPro" id="IPR017452">
    <property type="entry name" value="GPCR_Rhodpsn_7TM"/>
</dbReference>
<dbReference type="InterPro" id="IPR052676">
    <property type="entry name" value="Zinc-sensing_GPCR"/>
</dbReference>
<dbReference type="PANTHER" id="PTHR46752">
    <property type="entry name" value="G-PROTEIN COUPLED RECEPTOR 39"/>
    <property type="match status" value="1"/>
</dbReference>
<dbReference type="PANTHER" id="PTHR46752:SF1">
    <property type="entry name" value="G-PROTEIN COUPLED RECEPTOR 39"/>
    <property type="match status" value="1"/>
</dbReference>
<dbReference type="Pfam" id="PF00001">
    <property type="entry name" value="7tm_1"/>
    <property type="match status" value="1"/>
</dbReference>
<dbReference type="PRINTS" id="PR00237">
    <property type="entry name" value="GPCRRHODOPSN"/>
</dbReference>
<dbReference type="SUPFAM" id="SSF81321">
    <property type="entry name" value="Family A G protein-coupled receptor-like"/>
    <property type="match status" value="1"/>
</dbReference>
<dbReference type="PROSITE" id="PS00237">
    <property type="entry name" value="G_PROTEIN_RECEP_F1_1"/>
    <property type="match status" value="1"/>
</dbReference>
<dbReference type="PROSITE" id="PS50262">
    <property type="entry name" value="G_PROTEIN_RECEP_F1_2"/>
    <property type="match status" value="1"/>
</dbReference>
<keyword id="KW-1003">Cell membrane</keyword>
<keyword id="KW-1015">Disulfide bond</keyword>
<keyword id="KW-0297">G-protein coupled receptor</keyword>
<keyword id="KW-0325">Glycoprotein</keyword>
<keyword id="KW-0472">Membrane</keyword>
<keyword id="KW-0479">Metal-binding</keyword>
<keyword id="KW-0597">Phosphoprotein</keyword>
<keyword id="KW-0675">Receptor</keyword>
<keyword id="KW-1185">Reference proteome</keyword>
<keyword id="KW-0807">Transducer</keyword>
<keyword id="KW-0812">Transmembrane</keyword>
<keyword id="KW-1133">Transmembrane helix</keyword>
<keyword id="KW-0862">Zinc</keyword>
<feature type="chain" id="PRO_0000069566" description="G-protein coupled receptor 39">
    <location>
        <begin position="1"/>
        <end position="456"/>
    </location>
</feature>
<feature type="topological domain" description="Extracellular" evidence="2">
    <location>
        <begin position="1"/>
        <end position="34"/>
    </location>
</feature>
<feature type="transmembrane region" description="Helical; Name=1" evidence="2">
    <location>
        <begin position="35"/>
        <end position="55"/>
    </location>
</feature>
<feature type="topological domain" description="Cytoplasmic" evidence="2">
    <location>
        <begin position="56"/>
        <end position="69"/>
    </location>
</feature>
<feature type="transmembrane region" description="Helical; Name=2" evidence="2">
    <location>
        <begin position="70"/>
        <end position="89"/>
    </location>
</feature>
<feature type="topological domain" description="Extracellular" evidence="2">
    <location>
        <begin position="90"/>
        <end position="109"/>
    </location>
</feature>
<feature type="transmembrane region" description="Helical; Name=3" evidence="2">
    <location>
        <begin position="110"/>
        <end position="131"/>
    </location>
</feature>
<feature type="topological domain" description="Cytoplasmic" evidence="2">
    <location>
        <begin position="132"/>
        <end position="151"/>
    </location>
</feature>
<feature type="transmembrane region" description="Helical; Name=4" evidence="2">
    <location>
        <begin position="152"/>
        <end position="172"/>
    </location>
</feature>
<feature type="topological domain" description="Extracellular" evidence="2">
    <location>
        <begin position="173"/>
        <end position="217"/>
    </location>
</feature>
<feature type="transmembrane region" description="Helical; Name=5" evidence="2">
    <location>
        <begin position="218"/>
        <end position="242"/>
    </location>
</feature>
<feature type="topological domain" description="Cytoplasmic" evidence="2">
    <location>
        <begin position="243"/>
        <end position="283"/>
    </location>
</feature>
<feature type="transmembrane region" description="Helical; Name=6" evidence="2">
    <location>
        <begin position="284"/>
        <end position="305"/>
    </location>
</feature>
<feature type="topological domain" description="Extracellular" evidence="2">
    <location>
        <begin position="306"/>
        <end position="323"/>
    </location>
</feature>
<feature type="transmembrane region" description="Helical; Name=7" evidence="2">
    <location>
        <begin position="324"/>
        <end position="344"/>
    </location>
</feature>
<feature type="topological domain" description="Cytoplasmic" evidence="2">
    <location>
        <begin position="345"/>
        <end position="456"/>
    </location>
</feature>
<feature type="region of interest" description="Disordered" evidence="5">
    <location>
        <begin position="415"/>
        <end position="456"/>
    </location>
</feature>
<feature type="compositionally biased region" description="Polar residues" evidence="5">
    <location>
        <begin position="430"/>
        <end position="456"/>
    </location>
</feature>
<feature type="binding site" evidence="1">
    <location>
        <position position="17"/>
    </location>
    <ligand>
        <name>Zn(2+)</name>
        <dbReference type="ChEBI" id="CHEBI:29105"/>
    </ligand>
</feature>
<feature type="binding site" evidence="1">
    <location>
        <position position="19"/>
    </location>
    <ligand>
        <name>Zn(2+)</name>
        <dbReference type="ChEBI" id="CHEBI:29105"/>
    </ligand>
</feature>
<feature type="modified residue" description="Phosphoserine" evidence="1">
    <location>
        <position position="397"/>
    </location>
</feature>
<feature type="glycosylation site" description="N-linked (GlcNAc...) asparagine" evidence="3">
    <location>
        <position position="192"/>
    </location>
</feature>
<feature type="glycosylation site" description="N-linked (GlcNAc...) asparagine" evidence="3">
    <location>
        <position position="206"/>
    </location>
</feature>
<feature type="disulfide bond" evidence="4">
    <location>
        <begin position="11"/>
        <end position="191"/>
    </location>
</feature>
<feature type="disulfide bond" evidence="4">
    <location>
        <begin position="108"/>
        <end position="210"/>
    </location>
</feature>
<proteinExistence type="evidence at transcript level"/>